<name>ATPA1_LISMF</name>
<proteinExistence type="inferred from homology"/>
<reference key="1">
    <citation type="journal article" date="2004" name="Nucleic Acids Res.">
        <title>Whole genome comparisons of serotype 4b and 1/2a strains of the food-borne pathogen Listeria monocytogenes reveal new insights into the core genome components of this species.</title>
        <authorList>
            <person name="Nelson K.E."/>
            <person name="Fouts D.E."/>
            <person name="Mongodin E.F."/>
            <person name="Ravel J."/>
            <person name="DeBoy R.T."/>
            <person name="Kolonay J.F."/>
            <person name="Rasko D.A."/>
            <person name="Angiuoli S.V."/>
            <person name="Gill S.R."/>
            <person name="Paulsen I.T."/>
            <person name="Peterson J.D."/>
            <person name="White O."/>
            <person name="Nelson W.C."/>
            <person name="Nierman W.C."/>
            <person name="Beanan M.J."/>
            <person name="Brinkac L.M."/>
            <person name="Daugherty S.C."/>
            <person name="Dodson R.J."/>
            <person name="Durkin A.S."/>
            <person name="Madupu R."/>
            <person name="Haft D.H."/>
            <person name="Selengut J."/>
            <person name="Van Aken S.E."/>
            <person name="Khouri H.M."/>
            <person name="Fedorova N."/>
            <person name="Forberger H.A."/>
            <person name="Tran B."/>
            <person name="Kathariou S."/>
            <person name="Wonderling L.D."/>
            <person name="Uhlich G.A."/>
            <person name="Bayles D.O."/>
            <person name="Luchansky J.B."/>
            <person name="Fraser C.M."/>
        </authorList>
    </citation>
    <scope>NUCLEOTIDE SEQUENCE [LARGE SCALE GENOMIC DNA]</scope>
    <source>
        <strain>F2365</strain>
    </source>
</reference>
<feature type="chain" id="PRO_0000238281" description="ATP synthase subunit alpha 1">
    <location>
        <begin position="1"/>
        <end position="498"/>
    </location>
</feature>
<feature type="site" description="Required for activity" evidence="1">
    <location>
        <position position="357"/>
    </location>
</feature>
<gene>
    <name evidence="1" type="primary">atpA1</name>
    <name type="synonym">atpA-1</name>
    <name type="ordered locus">LMOf2365_0107</name>
</gene>
<organism>
    <name type="scientific">Listeria monocytogenes serotype 4b (strain F2365)</name>
    <dbReference type="NCBI Taxonomy" id="265669"/>
    <lineage>
        <taxon>Bacteria</taxon>
        <taxon>Bacillati</taxon>
        <taxon>Bacillota</taxon>
        <taxon>Bacilli</taxon>
        <taxon>Bacillales</taxon>
        <taxon>Listeriaceae</taxon>
        <taxon>Listeria</taxon>
    </lineage>
</organism>
<comment type="function">
    <text evidence="1">Produces ATP from ADP in the presence of a proton gradient across the membrane. The alpha chain is a regulatory subunit.</text>
</comment>
<comment type="catalytic activity">
    <reaction evidence="1">
        <text>ATP + H2O + 4 H(+)(in) = ADP + phosphate + 5 H(+)(out)</text>
        <dbReference type="Rhea" id="RHEA:57720"/>
        <dbReference type="ChEBI" id="CHEBI:15377"/>
        <dbReference type="ChEBI" id="CHEBI:15378"/>
        <dbReference type="ChEBI" id="CHEBI:30616"/>
        <dbReference type="ChEBI" id="CHEBI:43474"/>
        <dbReference type="ChEBI" id="CHEBI:456216"/>
        <dbReference type="EC" id="7.1.2.2"/>
    </reaction>
</comment>
<comment type="subunit">
    <text evidence="1">F-type ATPases have 2 components, CF(1) - the catalytic core - and CF(0) - the membrane proton channel. CF(1) has five subunits: alpha(3), beta(3), gamma(1), delta(1), epsilon(1). CF(0) has three main subunits: a(1), b(2) and c(9-12). The alpha and beta chains form an alternating ring which encloses part of the gamma chain. CF(1) is attached to CF(0) by a central stalk formed by the gamma and epsilon chains, while a peripheral stalk is formed by the delta and b chains.</text>
</comment>
<comment type="subcellular location">
    <subcellularLocation>
        <location evidence="1">Cell membrane</location>
        <topology evidence="1">Peripheral membrane protein</topology>
    </subcellularLocation>
</comment>
<comment type="similarity">
    <text evidence="1">Belongs to the ATPase alpha/beta chains family.</text>
</comment>
<evidence type="ECO:0000255" key="1">
    <source>
        <dbReference type="HAMAP-Rule" id="MF_01346"/>
    </source>
</evidence>
<protein>
    <recommendedName>
        <fullName evidence="1">ATP synthase subunit alpha 1</fullName>
        <ecNumber evidence="1">7.1.2.2</ecNumber>
    </recommendedName>
    <alternativeName>
        <fullName evidence="1">ATP synthase F1 sector subunit alpha 1</fullName>
    </alternativeName>
    <alternativeName>
        <fullName evidence="1">F-ATPase subunit alpha 1</fullName>
    </alternativeName>
</protein>
<accession>Q724W6</accession>
<keyword id="KW-0066">ATP synthesis</keyword>
<keyword id="KW-0067">ATP-binding</keyword>
<keyword id="KW-1003">Cell membrane</keyword>
<keyword id="KW-0139">CF(1)</keyword>
<keyword id="KW-0375">Hydrogen ion transport</keyword>
<keyword id="KW-0406">Ion transport</keyword>
<keyword id="KW-0472">Membrane</keyword>
<keyword id="KW-0547">Nucleotide-binding</keyword>
<keyword id="KW-1278">Translocase</keyword>
<keyword id="KW-0813">Transport</keyword>
<sequence length="498" mass="55142">MKTIHFDMNKYETHVDLEYLKEHGRVEKISDGVIFCSGLENAALHQAVLIDERHRGVILELNEEFVGIGLIDKTNDILEGMHVGVSGKFIEVDLFEEMAGRVIDTTGKMLYEESEEKPTATSPLFCVTPAIMTIDSVTRPLNTGLAVIDSITPIGRGQRQLILGNRQSGKTQIAVDTIINQHDQNVHCIYVAIGLKAAYIAEVIETLRNHGAMEYSTVVATAASDSLTAQYLTPYAGMAVAEALRDQGKDVLIILDDLTKHADAYRAITLLFNRPPGREAYPGDSFYIHSSLLERAVQMNEEHGGGSITAIPMIETLSDDVTAYIPTNVISITDGQLFLKSDLFNRGQKPAVDVGVSVSRIGGDAQHPIIRKLSKNLTLILSQFEELKELLDFGNALDDGSMKMVSDGRLLTELFKQKILSPLSVTELIVILYAFQNGFLTKIPPANIQTFKDLLLEKAHMHKDFESFSAQIETINELNESHIEMLEEIIREAGRLFS</sequence>
<dbReference type="EC" id="7.1.2.2" evidence="1"/>
<dbReference type="EMBL" id="AE017262">
    <property type="protein sequence ID" value="AAT02895.1"/>
    <property type="molecule type" value="Genomic_DNA"/>
</dbReference>
<dbReference type="RefSeq" id="WP_003728365.1">
    <property type="nucleotide sequence ID" value="NC_002973.6"/>
</dbReference>
<dbReference type="SMR" id="Q724W6"/>
<dbReference type="KEGG" id="lmf:LMOf2365_0107"/>
<dbReference type="HOGENOM" id="CLU_010091_2_1_9"/>
<dbReference type="GO" id="GO:0005886">
    <property type="term" value="C:plasma membrane"/>
    <property type="evidence" value="ECO:0007669"/>
    <property type="project" value="UniProtKB-SubCell"/>
</dbReference>
<dbReference type="GO" id="GO:0045259">
    <property type="term" value="C:proton-transporting ATP synthase complex"/>
    <property type="evidence" value="ECO:0007669"/>
    <property type="project" value="UniProtKB-KW"/>
</dbReference>
<dbReference type="GO" id="GO:0043531">
    <property type="term" value="F:ADP binding"/>
    <property type="evidence" value="ECO:0007669"/>
    <property type="project" value="TreeGrafter"/>
</dbReference>
<dbReference type="GO" id="GO:0005524">
    <property type="term" value="F:ATP binding"/>
    <property type="evidence" value="ECO:0007669"/>
    <property type="project" value="UniProtKB-UniRule"/>
</dbReference>
<dbReference type="GO" id="GO:0046933">
    <property type="term" value="F:proton-transporting ATP synthase activity, rotational mechanism"/>
    <property type="evidence" value="ECO:0007669"/>
    <property type="project" value="UniProtKB-UniRule"/>
</dbReference>
<dbReference type="CDD" id="cd18113">
    <property type="entry name" value="ATP-synt_F1_alpha_C"/>
    <property type="match status" value="1"/>
</dbReference>
<dbReference type="CDD" id="cd01132">
    <property type="entry name" value="F1-ATPase_alpha_CD"/>
    <property type="match status" value="1"/>
</dbReference>
<dbReference type="FunFam" id="3.40.50.300:FF:000002">
    <property type="entry name" value="ATP synthase subunit alpha"/>
    <property type="match status" value="1"/>
</dbReference>
<dbReference type="Gene3D" id="2.40.30.20">
    <property type="match status" value="1"/>
</dbReference>
<dbReference type="Gene3D" id="1.20.150.20">
    <property type="entry name" value="ATP synthase alpha/beta chain, C-terminal domain"/>
    <property type="match status" value="1"/>
</dbReference>
<dbReference type="Gene3D" id="3.40.50.300">
    <property type="entry name" value="P-loop containing nucleotide triphosphate hydrolases"/>
    <property type="match status" value="1"/>
</dbReference>
<dbReference type="HAMAP" id="MF_01346">
    <property type="entry name" value="ATP_synth_alpha_bact"/>
    <property type="match status" value="1"/>
</dbReference>
<dbReference type="InterPro" id="IPR023366">
    <property type="entry name" value="ATP_synth_asu-like_sf"/>
</dbReference>
<dbReference type="InterPro" id="IPR000793">
    <property type="entry name" value="ATP_synth_asu_C"/>
</dbReference>
<dbReference type="InterPro" id="IPR038376">
    <property type="entry name" value="ATP_synth_asu_C_sf"/>
</dbReference>
<dbReference type="InterPro" id="IPR033732">
    <property type="entry name" value="ATP_synth_F1_a_nt-bd_dom"/>
</dbReference>
<dbReference type="InterPro" id="IPR005294">
    <property type="entry name" value="ATP_synth_F1_asu"/>
</dbReference>
<dbReference type="InterPro" id="IPR020003">
    <property type="entry name" value="ATPase_a/bsu_AS"/>
</dbReference>
<dbReference type="InterPro" id="IPR036121">
    <property type="entry name" value="ATPase_F1/V1/A1_a/bsu_N_sf"/>
</dbReference>
<dbReference type="InterPro" id="IPR000194">
    <property type="entry name" value="ATPase_F1/V1/A1_a/bsu_nucl-bd"/>
</dbReference>
<dbReference type="InterPro" id="IPR027417">
    <property type="entry name" value="P-loop_NTPase"/>
</dbReference>
<dbReference type="NCBIfam" id="TIGR00962">
    <property type="entry name" value="atpA"/>
    <property type="match status" value="1"/>
</dbReference>
<dbReference type="NCBIfam" id="NF009884">
    <property type="entry name" value="PRK13343.1"/>
    <property type="match status" value="1"/>
</dbReference>
<dbReference type="PANTHER" id="PTHR48082">
    <property type="entry name" value="ATP SYNTHASE SUBUNIT ALPHA, MITOCHONDRIAL"/>
    <property type="match status" value="1"/>
</dbReference>
<dbReference type="PANTHER" id="PTHR48082:SF2">
    <property type="entry name" value="ATP SYNTHASE SUBUNIT ALPHA, MITOCHONDRIAL"/>
    <property type="match status" value="1"/>
</dbReference>
<dbReference type="Pfam" id="PF00006">
    <property type="entry name" value="ATP-synt_ab"/>
    <property type="match status" value="1"/>
</dbReference>
<dbReference type="Pfam" id="PF00306">
    <property type="entry name" value="ATP-synt_ab_C"/>
    <property type="match status" value="1"/>
</dbReference>
<dbReference type="SUPFAM" id="SSF47917">
    <property type="entry name" value="C-terminal domain of alpha and beta subunits of F1 ATP synthase"/>
    <property type="match status" value="1"/>
</dbReference>
<dbReference type="SUPFAM" id="SSF50615">
    <property type="entry name" value="N-terminal domain of alpha and beta subunits of F1 ATP synthase"/>
    <property type="match status" value="1"/>
</dbReference>
<dbReference type="SUPFAM" id="SSF52540">
    <property type="entry name" value="P-loop containing nucleoside triphosphate hydrolases"/>
    <property type="match status" value="1"/>
</dbReference>
<dbReference type="PROSITE" id="PS00152">
    <property type="entry name" value="ATPASE_ALPHA_BETA"/>
    <property type="match status" value="1"/>
</dbReference>